<comment type="function">
    <text evidence="1">Component of the ERMES/MDM complex, which serves as a molecular tether to connect the endoplasmic reticulum (ER) and mitochondria. Components of this complex are involved in the control of mitochondrial shape and protein biogenesis, and function in nonvesicular lipid trafficking between the ER and mitochondria. MDM34 is required for the interaction of the ER-resident membrane protein MMM1 and the outer mitochondrial membrane-resident beta-barrel protein MDM10.</text>
</comment>
<comment type="subunit">
    <text evidence="1">Component of the ER-mitochondria encounter structure (ERMES) or MDM complex, composed of MMM1, MDM10, MDM12 and MDM34.</text>
</comment>
<comment type="subcellular location">
    <subcellularLocation>
        <location evidence="1">Mitochondrion outer membrane</location>
        <topology evidence="1">Multi-pass membrane protein</topology>
    </subcellularLocation>
    <text evidence="1">The ERMES/MDM complex localizes to a few discrete foci (around 10 per single cell), that represent mitochondria-endoplasmic reticulum junctions. These foci are often found next to mtDNA nucleoids.</text>
</comment>
<comment type="domain">
    <text evidence="1">Lacks alpha-helical transmembrane segments, suggesting that it resides in the membrane via beta-sheet conformations similar to those predicted for other outer membrane proteins and porin.</text>
</comment>
<comment type="domain">
    <text evidence="1">The SMP-LTD domain is a barrel-like domain that can bind various types of glycerophospholipids in its interior and mediate their transfer between two adjacent bilayers.</text>
</comment>
<comment type="similarity">
    <text evidence="1">Belongs to the MDM34 family.</text>
</comment>
<protein>
    <recommendedName>
        <fullName evidence="1">Mitochondrial distribution and morphology protein 34</fullName>
    </recommendedName>
</protein>
<dbReference type="EMBL" id="AAEY01000024">
    <property type="protein sequence ID" value="EAL20881.1"/>
    <property type="molecule type" value="Genomic_DNA"/>
</dbReference>
<dbReference type="RefSeq" id="XP_775528.1">
    <property type="nucleotide sequence ID" value="XM_770435.1"/>
</dbReference>
<dbReference type="SMR" id="P0CO71"/>
<dbReference type="EnsemblFungi" id="AAW43635">
    <property type="protein sequence ID" value="AAW43635"/>
    <property type="gene ID" value="CNE02420"/>
</dbReference>
<dbReference type="GeneID" id="4936252"/>
<dbReference type="KEGG" id="cnb:CNBE2420"/>
<dbReference type="VEuPathDB" id="FungiDB:CNBE2420"/>
<dbReference type="HOGENOM" id="CLU_036502_0_0_1"/>
<dbReference type="OrthoDB" id="7301at5206"/>
<dbReference type="GO" id="GO:0032865">
    <property type="term" value="C:ERMES complex"/>
    <property type="evidence" value="ECO:0007669"/>
    <property type="project" value="UniProtKB-UniRule"/>
</dbReference>
<dbReference type="GO" id="GO:0008289">
    <property type="term" value="F:lipid binding"/>
    <property type="evidence" value="ECO:0007669"/>
    <property type="project" value="UniProtKB-KW"/>
</dbReference>
<dbReference type="GO" id="GO:0000002">
    <property type="term" value="P:mitochondrial genome maintenance"/>
    <property type="evidence" value="ECO:0007669"/>
    <property type="project" value="UniProtKB-UniRule"/>
</dbReference>
<dbReference type="GO" id="GO:1990456">
    <property type="term" value="P:mitochondrion-endoplasmic reticulum membrane tethering"/>
    <property type="evidence" value="ECO:0007669"/>
    <property type="project" value="TreeGrafter"/>
</dbReference>
<dbReference type="GO" id="GO:0015914">
    <property type="term" value="P:phospholipid transport"/>
    <property type="evidence" value="ECO:0007669"/>
    <property type="project" value="TreeGrafter"/>
</dbReference>
<dbReference type="CDD" id="cd21673">
    <property type="entry name" value="SMP_Mdm34"/>
    <property type="match status" value="1"/>
</dbReference>
<dbReference type="HAMAP" id="MF_03105">
    <property type="entry name" value="Mdm34"/>
    <property type="match status" value="1"/>
</dbReference>
<dbReference type="InterPro" id="IPR027536">
    <property type="entry name" value="Mdm34"/>
</dbReference>
<dbReference type="InterPro" id="IPR031468">
    <property type="entry name" value="SMP_LBD"/>
</dbReference>
<dbReference type="PANTHER" id="PTHR28185">
    <property type="entry name" value="MITOCHONDRIAL DISTRIBUTION AND MORPHOLOGY PROTEIN 34"/>
    <property type="match status" value="1"/>
</dbReference>
<dbReference type="PANTHER" id="PTHR28185:SF1">
    <property type="entry name" value="MITOCHONDRIAL DISTRIBUTION AND MORPHOLOGY PROTEIN 34"/>
    <property type="match status" value="1"/>
</dbReference>
<dbReference type="PROSITE" id="PS51847">
    <property type="entry name" value="SMP"/>
    <property type="match status" value="1"/>
</dbReference>
<proteinExistence type="inferred from homology"/>
<reference key="1">
    <citation type="journal article" date="2005" name="Science">
        <title>The genome of the basidiomycetous yeast and human pathogen Cryptococcus neoformans.</title>
        <authorList>
            <person name="Loftus B.J."/>
            <person name="Fung E."/>
            <person name="Roncaglia P."/>
            <person name="Rowley D."/>
            <person name="Amedeo P."/>
            <person name="Bruno D."/>
            <person name="Vamathevan J."/>
            <person name="Miranda M."/>
            <person name="Anderson I.J."/>
            <person name="Fraser J.A."/>
            <person name="Allen J.E."/>
            <person name="Bosdet I.E."/>
            <person name="Brent M.R."/>
            <person name="Chiu R."/>
            <person name="Doering T.L."/>
            <person name="Donlin M.J."/>
            <person name="D'Souza C.A."/>
            <person name="Fox D.S."/>
            <person name="Grinberg V."/>
            <person name="Fu J."/>
            <person name="Fukushima M."/>
            <person name="Haas B.J."/>
            <person name="Huang J.C."/>
            <person name="Janbon G."/>
            <person name="Jones S.J.M."/>
            <person name="Koo H.L."/>
            <person name="Krzywinski M.I."/>
            <person name="Kwon-Chung K.J."/>
            <person name="Lengeler K.B."/>
            <person name="Maiti R."/>
            <person name="Marra M.A."/>
            <person name="Marra R.E."/>
            <person name="Mathewson C.A."/>
            <person name="Mitchell T.G."/>
            <person name="Pertea M."/>
            <person name="Riggs F.R."/>
            <person name="Salzberg S.L."/>
            <person name="Schein J.E."/>
            <person name="Shvartsbeyn A."/>
            <person name="Shin H."/>
            <person name="Shumway M."/>
            <person name="Specht C.A."/>
            <person name="Suh B.B."/>
            <person name="Tenney A."/>
            <person name="Utterback T.R."/>
            <person name="Wickes B.L."/>
            <person name="Wortman J.R."/>
            <person name="Wye N.H."/>
            <person name="Kronstad J.W."/>
            <person name="Lodge J.K."/>
            <person name="Heitman J."/>
            <person name="Davis R.W."/>
            <person name="Fraser C.M."/>
            <person name="Hyman R.W."/>
        </authorList>
    </citation>
    <scope>NUCLEOTIDE SEQUENCE [LARGE SCALE GENOMIC DNA]</scope>
    <source>
        <strain>B-3501A</strain>
    </source>
</reference>
<organism>
    <name type="scientific">Cryptococcus neoformans var. neoformans serotype D (strain B-3501A)</name>
    <name type="common">Filobasidiella neoformans</name>
    <dbReference type="NCBI Taxonomy" id="283643"/>
    <lineage>
        <taxon>Eukaryota</taxon>
        <taxon>Fungi</taxon>
        <taxon>Dikarya</taxon>
        <taxon>Basidiomycota</taxon>
        <taxon>Agaricomycotina</taxon>
        <taxon>Tremellomycetes</taxon>
        <taxon>Tremellales</taxon>
        <taxon>Cryptococcaceae</taxon>
        <taxon>Cryptococcus</taxon>
        <taxon>Cryptococcus neoformans species complex</taxon>
    </lineage>
</organism>
<gene>
    <name evidence="1" type="primary">MDM34</name>
    <name type="ordered locus">CNBE2420</name>
</gene>
<name>MDM34_CRYNB</name>
<feature type="chain" id="PRO_0000410141" description="Mitochondrial distribution and morphology protein 34">
    <location>
        <begin position="1"/>
        <end position="343"/>
    </location>
</feature>
<feature type="domain" description="SMP-LTD" evidence="1">
    <location>
        <begin position="1"/>
        <end position="196"/>
    </location>
</feature>
<feature type="region of interest" description="Disordered" evidence="2">
    <location>
        <begin position="227"/>
        <end position="255"/>
    </location>
</feature>
<feature type="region of interest" description="Disordered" evidence="2">
    <location>
        <begin position="300"/>
        <end position="325"/>
    </location>
</feature>
<feature type="compositionally biased region" description="Low complexity" evidence="2">
    <location>
        <begin position="306"/>
        <end position="317"/>
    </location>
</feature>
<sequence>MSFVFPSWSTAFSPAFHEDAKAMLEGALNKGDKPPVIQGKIEVVELHMGEQPPTLTLLEIGDLSIDRFRGILRLGYQGDAWLEVRCRVQANPLSHNPHLTFSTLPLSTPLLASQPLLVPMTLRLSKLHLRAILILVVSASKGITLVFKNDPLQNVDVSSTFDSVEVIRGYLQQEIEGQLREMFREHLPGIIHRLSQKWFSGSGVGGKVEMPYRDMSPVPSYAPINEEVEEEENEENHGTSPGNEESFPPRHIGPGGITLPLNNSVSQLAALSYSAHTLSPYARGHEHIAVRSFPYLGKSGAGTGSSGRASLASSSVGEGDIKAKRKRIFRIGKSKEADEKSEA</sequence>
<evidence type="ECO:0000255" key="1">
    <source>
        <dbReference type="HAMAP-Rule" id="MF_03105"/>
    </source>
</evidence>
<evidence type="ECO:0000256" key="2">
    <source>
        <dbReference type="SAM" id="MobiDB-lite"/>
    </source>
</evidence>
<accession>P0CO71</accession>
<accession>Q55SE0</accession>
<accession>Q5KGT4</accession>
<keyword id="KW-0445">Lipid transport</keyword>
<keyword id="KW-0446">Lipid-binding</keyword>
<keyword id="KW-0472">Membrane</keyword>
<keyword id="KW-0496">Mitochondrion</keyword>
<keyword id="KW-1000">Mitochondrion outer membrane</keyword>
<keyword id="KW-0812">Transmembrane</keyword>
<keyword id="KW-1134">Transmembrane beta strand</keyword>
<keyword id="KW-0813">Transport</keyword>